<proteinExistence type="evidence at protein level"/>
<keyword id="KW-0002">3D-structure</keyword>
<keyword id="KW-1185">Reference proteome</keyword>
<comment type="similarity">
    <text evidence="1">Belongs to the UPF0339 family.</text>
</comment>
<gene>
    <name type="ordered locus">Atu0232</name>
    <name type="ORF">AGR_C_390</name>
</gene>
<dbReference type="EMBL" id="AE007869">
    <property type="protein sequence ID" value="AAK86048.1"/>
    <property type="molecule type" value="Genomic_DNA"/>
</dbReference>
<dbReference type="PIR" id="AH2604">
    <property type="entry name" value="AH2604"/>
</dbReference>
<dbReference type="PIR" id="G97386">
    <property type="entry name" value="G97386"/>
</dbReference>
<dbReference type="RefSeq" id="NP_353263.1">
    <property type="nucleotide sequence ID" value="NC_003062.2"/>
</dbReference>
<dbReference type="RefSeq" id="WP_010970746.1">
    <property type="nucleotide sequence ID" value="NC_003062.2"/>
</dbReference>
<dbReference type="PDB" id="2K7I">
    <property type="method" value="NMR"/>
    <property type="chains" value="A/B=1-62"/>
</dbReference>
<dbReference type="PDBsum" id="2K7I"/>
<dbReference type="BMRB" id="Q8UIR1"/>
<dbReference type="SMR" id="Q8UIR1"/>
<dbReference type="STRING" id="176299.Atu0232"/>
<dbReference type="EnsemblBacteria" id="AAK86048">
    <property type="protein sequence ID" value="AAK86048"/>
    <property type="gene ID" value="Atu0232"/>
</dbReference>
<dbReference type="GeneID" id="1132270"/>
<dbReference type="KEGG" id="atu:Atu0232"/>
<dbReference type="PATRIC" id="fig|176299.10.peg.222"/>
<dbReference type="eggNOG" id="COG3422">
    <property type="taxonomic scope" value="Bacteria"/>
</dbReference>
<dbReference type="HOGENOM" id="CLU_163886_1_2_5"/>
<dbReference type="OrthoDB" id="9802792at2"/>
<dbReference type="PhylomeDB" id="Q8UIR1"/>
<dbReference type="BioCyc" id="AGRO:ATU0232-MONOMER"/>
<dbReference type="EvolutionaryTrace" id="Q8UIR1"/>
<dbReference type="Proteomes" id="UP000000813">
    <property type="component" value="Chromosome circular"/>
</dbReference>
<dbReference type="Gene3D" id="3.30.160.160">
    <property type="entry name" value="YegP-like"/>
    <property type="match status" value="1"/>
</dbReference>
<dbReference type="InterPro" id="IPR010879">
    <property type="entry name" value="DUF1508"/>
</dbReference>
<dbReference type="InterPro" id="IPR051141">
    <property type="entry name" value="UPF0339_domain"/>
</dbReference>
<dbReference type="InterPro" id="IPR036913">
    <property type="entry name" value="YegP-like_sf"/>
</dbReference>
<dbReference type="PANTHER" id="PTHR40606">
    <property type="match status" value="1"/>
</dbReference>
<dbReference type="PANTHER" id="PTHR40606:SF1">
    <property type="entry name" value="UPF0339 PROTEIN YEGP"/>
    <property type="match status" value="1"/>
</dbReference>
<dbReference type="Pfam" id="PF07411">
    <property type="entry name" value="DUF1508"/>
    <property type="match status" value="1"/>
</dbReference>
<dbReference type="SUPFAM" id="SSF160113">
    <property type="entry name" value="YegP-like"/>
    <property type="match status" value="1"/>
</dbReference>
<reference key="1">
    <citation type="journal article" date="2001" name="Science">
        <title>The genome of the natural genetic engineer Agrobacterium tumefaciens C58.</title>
        <authorList>
            <person name="Wood D.W."/>
            <person name="Setubal J.C."/>
            <person name="Kaul R."/>
            <person name="Monks D.E."/>
            <person name="Kitajima J.P."/>
            <person name="Okura V.K."/>
            <person name="Zhou Y."/>
            <person name="Chen L."/>
            <person name="Wood G.E."/>
            <person name="Almeida N.F. Jr."/>
            <person name="Woo L."/>
            <person name="Chen Y."/>
            <person name="Paulsen I.T."/>
            <person name="Eisen J.A."/>
            <person name="Karp P.D."/>
            <person name="Bovee D. Sr."/>
            <person name="Chapman P."/>
            <person name="Clendenning J."/>
            <person name="Deatherage G."/>
            <person name="Gillet W."/>
            <person name="Grant C."/>
            <person name="Kutyavin T."/>
            <person name="Levy R."/>
            <person name="Li M.-J."/>
            <person name="McClelland E."/>
            <person name="Palmieri A."/>
            <person name="Raymond C."/>
            <person name="Rouse G."/>
            <person name="Saenphimmachak C."/>
            <person name="Wu Z."/>
            <person name="Romero P."/>
            <person name="Gordon D."/>
            <person name="Zhang S."/>
            <person name="Yoo H."/>
            <person name="Tao Y."/>
            <person name="Biddle P."/>
            <person name="Jung M."/>
            <person name="Krespan W."/>
            <person name="Perry M."/>
            <person name="Gordon-Kamm B."/>
            <person name="Liao L."/>
            <person name="Kim S."/>
            <person name="Hendrick C."/>
            <person name="Zhao Z.-Y."/>
            <person name="Dolan M."/>
            <person name="Chumley F."/>
            <person name="Tingey S.V."/>
            <person name="Tomb J.-F."/>
            <person name="Gordon M.P."/>
            <person name="Olson M.V."/>
            <person name="Nester E.W."/>
        </authorList>
    </citation>
    <scope>NUCLEOTIDE SEQUENCE [LARGE SCALE GENOMIC DNA]</scope>
    <source>
        <strain>C58 / ATCC 33970</strain>
    </source>
</reference>
<reference key="2">
    <citation type="journal article" date="2001" name="Science">
        <title>Genome sequence of the plant pathogen and biotechnology agent Agrobacterium tumefaciens C58.</title>
        <authorList>
            <person name="Goodner B."/>
            <person name="Hinkle G."/>
            <person name="Gattung S."/>
            <person name="Miller N."/>
            <person name="Blanchard M."/>
            <person name="Qurollo B."/>
            <person name="Goldman B.S."/>
            <person name="Cao Y."/>
            <person name="Askenazi M."/>
            <person name="Halling C."/>
            <person name="Mullin L."/>
            <person name="Houmiel K."/>
            <person name="Gordon J."/>
            <person name="Vaudin M."/>
            <person name="Iartchouk O."/>
            <person name="Epp A."/>
            <person name="Liu F."/>
            <person name="Wollam C."/>
            <person name="Allinger M."/>
            <person name="Doughty D."/>
            <person name="Scott C."/>
            <person name="Lappas C."/>
            <person name="Markelz B."/>
            <person name="Flanagan C."/>
            <person name="Crowell C."/>
            <person name="Gurson J."/>
            <person name="Lomo C."/>
            <person name="Sear C."/>
            <person name="Strub G."/>
            <person name="Cielo C."/>
            <person name="Slater S."/>
        </authorList>
    </citation>
    <scope>NUCLEOTIDE SEQUENCE [LARGE SCALE GENOMIC DNA]</scope>
    <source>
        <strain>C58 / ATCC 33970</strain>
    </source>
</reference>
<name>Y232_AGRFC</name>
<evidence type="ECO:0000305" key="1"/>
<evidence type="ECO:0007829" key="2">
    <source>
        <dbReference type="PDB" id="2K7I"/>
    </source>
</evidence>
<feature type="chain" id="PRO_0000218129" description="UPF0339 protein Atu0232">
    <location>
        <begin position="1"/>
        <end position="62"/>
    </location>
</feature>
<feature type="strand" evidence="2">
    <location>
        <begin position="3"/>
        <end position="8"/>
    </location>
</feature>
<feature type="strand" evidence="2">
    <location>
        <begin position="14"/>
        <end position="18"/>
    </location>
</feature>
<feature type="strand" evidence="2">
    <location>
        <begin position="27"/>
        <end position="29"/>
    </location>
</feature>
<feature type="strand" evidence="2">
    <location>
        <begin position="32"/>
        <end position="34"/>
    </location>
</feature>
<feature type="helix" evidence="2">
    <location>
        <begin position="35"/>
        <end position="48"/>
    </location>
</feature>
<feature type="turn" evidence="2">
    <location>
        <begin position="49"/>
        <end position="51"/>
    </location>
</feature>
<feature type="strand" evidence="2">
    <location>
        <begin position="52"/>
        <end position="56"/>
    </location>
</feature>
<accession>Q8UIR1</accession>
<accession>Q7D1W6</accession>
<organism>
    <name type="scientific">Agrobacterium fabrum (strain C58 / ATCC 33970)</name>
    <name type="common">Agrobacterium tumefaciens (strain C58)</name>
    <dbReference type="NCBI Taxonomy" id="176299"/>
    <lineage>
        <taxon>Bacteria</taxon>
        <taxon>Pseudomonadati</taxon>
        <taxon>Pseudomonadota</taxon>
        <taxon>Alphaproteobacteria</taxon>
        <taxon>Hyphomicrobiales</taxon>
        <taxon>Rhizobiaceae</taxon>
        <taxon>Rhizobium/Agrobacterium group</taxon>
        <taxon>Agrobacterium</taxon>
        <taxon>Agrobacterium tumefaciens complex</taxon>
    </lineage>
</organism>
<sequence>MYKFEIYQDKAGEYRFRFKASNGETMFSSEGYKAKASAIHAIESIKRNSAGADTVDLTTMTA</sequence>
<protein>
    <recommendedName>
        <fullName>UPF0339 protein Atu0232</fullName>
    </recommendedName>
</protein>